<comment type="function">
    <text evidence="1">Involved in pre-mRNA splicing as a component of the splicing factor SF3A complex that contributes to the assembly of the 17S U2 snRNP, and the subsequent assembly of the pre-spliceosome 'E' complex and the pre-catalytic spliceosome 'A' complex. Involved in pre-mRNA splicing as a component of pre-catalytic spliceosome 'B' complexes, including the Bact complex.</text>
</comment>
<comment type="subunit">
    <text evidence="1">Component of splicing factor SF3A which associates with the splicing factor SF3B and a 12S RNA unit to form the mature 17S U2 small nuclear ribonucleoprotein complex (17S U2 snRNP). Identified in the spliceosome 'E' complex, a precursor of the spliceosome 'A' complex. Identified in the spliceosome 'A' and 'B' complexes. Identified in the spliceosome 'C' complex.</text>
</comment>
<comment type="subcellular location">
    <subcellularLocation>
        <location evidence="1">Nucleus</location>
    </subcellularLocation>
</comment>
<comment type="similarity">
    <text evidence="2">Belongs to the SF3A2 family.</text>
</comment>
<organism>
    <name type="scientific">Dictyostelium discoideum</name>
    <name type="common">Social amoeba</name>
    <dbReference type="NCBI Taxonomy" id="44689"/>
    <lineage>
        <taxon>Eukaryota</taxon>
        <taxon>Amoebozoa</taxon>
        <taxon>Evosea</taxon>
        <taxon>Eumycetozoa</taxon>
        <taxon>Dictyostelia</taxon>
        <taxon>Dictyosteliales</taxon>
        <taxon>Dictyosteliaceae</taxon>
        <taxon>Dictyostelium</taxon>
    </lineage>
</organism>
<protein>
    <recommendedName>
        <fullName>Splicing factor 3A subunit 2</fullName>
    </recommendedName>
</protein>
<feature type="chain" id="PRO_0000328490" description="Splicing factor 3A subunit 2">
    <location>
        <begin position="1"/>
        <end position="215"/>
    </location>
</feature>
<feature type="zinc finger region" description="Matrin-type">
    <location>
        <begin position="50"/>
        <end position="80"/>
    </location>
</feature>
<keyword id="KW-0479">Metal-binding</keyword>
<keyword id="KW-0507">mRNA processing</keyword>
<keyword id="KW-0508">mRNA splicing</keyword>
<keyword id="KW-0539">Nucleus</keyword>
<keyword id="KW-1185">Reference proteome</keyword>
<keyword id="KW-0747">Spliceosome</keyword>
<keyword id="KW-0862">Zinc</keyword>
<keyword id="KW-0863">Zinc-finger</keyword>
<proteinExistence type="inferred from homology"/>
<reference key="1">
    <citation type="journal article" date="2005" name="Nature">
        <title>The genome of the social amoeba Dictyostelium discoideum.</title>
        <authorList>
            <person name="Eichinger L."/>
            <person name="Pachebat J.A."/>
            <person name="Gloeckner G."/>
            <person name="Rajandream M.A."/>
            <person name="Sucgang R."/>
            <person name="Berriman M."/>
            <person name="Song J."/>
            <person name="Olsen R."/>
            <person name="Szafranski K."/>
            <person name="Xu Q."/>
            <person name="Tunggal B."/>
            <person name="Kummerfeld S."/>
            <person name="Madera M."/>
            <person name="Konfortov B.A."/>
            <person name="Rivero F."/>
            <person name="Bankier A.T."/>
            <person name="Lehmann R."/>
            <person name="Hamlin N."/>
            <person name="Davies R."/>
            <person name="Gaudet P."/>
            <person name="Fey P."/>
            <person name="Pilcher K."/>
            <person name="Chen G."/>
            <person name="Saunders D."/>
            <person name="Sodergren E.J."/>
            <person name="Davis P."/>
            <person name="Kerhornou A."/>
            <person name="Nie X."/>
            <person name="Hall N."/>
            <person name="Anjard C."/>
            <person name="Hemphill L."/>
            <person name="Bason N."/>
            <person name="Farbrother P."/>
            <person name="Desany B."/>
            <person name="Just E."/>
            <person name="Morio T."/>
            <person name="Rost R."/>
            <person name="Churcher C.M."/>
            <person name="Cooper J."/>
            <person name="Haydock S."/>
            <person name="van Driessche N."/>
            <person name="Cronin A."/>
            <person name="Goodhead I."/>
            <person name="Muzny D.M."/>
            <person name="Mourier T."/>
            <person name="Pain A."/>
            <person name="Lu M."/>
            <person name="Harper D."/>
            <person name="Lindsay R."/>
            <person name="Hauser H."/>
            <person name="James K.D."/>
            <person name="Quiles M."/>
            <person name="Madan Babu M."/>
            <person name="Saito T."/>
            <person name="Buchrieser C."/>
            <person name="Wardroper A."/>
            <person name="Felder M."/>
            <person name="Thangavelu M."/>
            <person name="Johnson D."/>
            <person name="Knights A."/>
            <person name="Loulseged H."/>
            <person name="Mungall K.L."/>
            <person name="Oliver K."/>
            <person name="Price C."/>
            <person name="Quail M.A."/>
            <person name="Urushihara H."/>
            <person name="Hernandez J."/>
            <person name="Rabbinowitsch E."/>
            <person name="Steffen D."/>
            <person name="Sanders M."/>
            <person name="Ma J."/>
            <person name="Kohara Y."/>
            <person name="Sharp S."/>
            <person name="Simmonds M.N."/>
            <person name="Spiegler S."/>
            <person name="Tivey A."/>
            <person name="Sugano S."/>
            <person name="White B."/>
            <person name="Walker D."/>
            <person name="Woodward J.R."/>
            <person name="Winckler T."/>
            <person name="Tanaka Y."/>
            <person name="Shaulsky G."/>
            <person name="Schleicher M."/>
            <person name="Weinstock G.M."/>
            <person name="Rosenthal A."/>
            <person name="Cox E.C."/>
            <person name="Chisholm R.L."/>
            <person name="Gibbs R.A."/>
            <person name="Loomis W.F."/>
            <person name="Platzer M."/>
            <person name="Kay R.R."/>
            <person name="Williams J.G."/>
            <person name="Dear P.H."/>
            <person name="Noegel A.A."/>
            <person name="Barrell B.G."/>
            <person name="Kuspa A."/>
        </authorList>
    </citation>
    <scope>NUCLEOTIDE SEQUENCE [LARGE SCALE GENOMIC DNA]</scope>
    <source>
        <strain>AX4</strain>
    </source>
</reference>
<dbReference type="EMBL" id="AAFI02000223">
    <property type="protein sequence ID" value="EAL60509.1"/>
    <property type="molecule type" value="Genomic_DNA"/>
</dbReference>
<dbReference type="RefSeq" id="XP_628923.1">
    <property type="nucleotide sequence ID" value="XM_628921.1"/>
</dbReference>
<dbReference type="SMR" id="Q54B65"/>
<dbReference type="FunCoup" id="Q54B65">
    <property type="interactions" value="461"/>
</dbReference>
<dbReference type="STRING" id="44689.Q54B65"/>
<dbReference type="PaxDb" id="44689-DDB0233181"/>
<dbReference type="EnsemblProtists" id="EAL60509">
    <property type="protein sequence ID" value="EAL60509"/>
    <property type="gene ID" value="DDB_G0293876"/>
</dbReference>
<dbReference type="GeneID" id="8629465"/>
<dbReference type="KEGG" id="ddi:DDB_G0293876"/>
<dbReference type="dictyBase" id="DDB_G0293876">
    <property type="gene designation" value="sf3a2"/>
</dbReference>
<dbReference type="VEuPathDB" id="AmoebaDB:DDB_G0293876"/>
<dbReference type="eggNOG" id="KOG0227">
    <property type="taxonomic scope" value="Eukaryota"/>
</dbReference>
<dbReference type="HOGENOM" id="CLU_050757_0_0_1"/>
<dbReference type="InParanoid" id="Q54B65"/>
<dbReference type="OMA" id="EFWIQIM"/>
<dbReference type="PhylomeDB" id="Q54B65"/>
<dbReference type="PRO" id="PR:Q54B65"/>
<dbReference type="Proteomes" id="UP000002195">
    <property type="component" value="Chromosome 6"/>
</dbReference>
<dbReference type="GO" id="GO:0071013">
    <property type="term" value="C:catalytic step 2 spliceosome"/>
    <property type="evidence" value="ECO:0000318"/>
    <property type="project" value="GO_Central"/>
</dbReference>
<dbReference type="GO" id="GO:0005634">
    <property type="term" value="C:nucleus"/>
    <property type="evidence" value="ECO:0000250"/>
    <property type="project" value="UniProtKB"/>
</dbReference>
<dbReference type="GO" id="GO:0005681">
    <property type="term" value="C:spliceosomal complex"/>
    <property type="evidence" value="ECO:0000250"/>
    <property type="project" value="dictyBase"/>
</dbReference>
<dbReference type="GO" id="GO:0005686">
    <property type="term" value="C:U2 snRNP"/>
    <property type="evidence" value="ECO:0000250"/>
    <property type="project" value="UniProtKB"/>
</dbReference>
<dbReference type="GO" id="GO:0071005">
    <property type="term" value="C:U2-type precatalytic spliceosome"/>
    <property type="evidence" value="ECO:0000250"/>
    <property type="project" value="UniProtKB"/>
</dbReference>
<dbReference type="GO" id="GO:0071004">
    <property type="term" value="C:U2-type prespliceosome"/>
    <property type="evidence" value="ECO:0000318"/>
    <property type="project" value="GO_Central"/>
</dbReference>
<dbReference type="GO" id="GO:0003676">
    <property type="term" value="F:nucleic acid binding"/>
    <property type="evidence" value="ECO:0007669"/>
    <property type="project" value="InterPro"/>
</dbReference>
<dbReference type="GO" id="GO:0008270">
    <property type="term" value="F:zinc ion binding"/>
    <property type="evidence" value="ECO:0007669"/>
    <property type="project" value="UniProtKB-KW"/>
</dbReference>
<dbReference type="GO" id="GO:0000398">
    <property type="term" value="P:mRNA splicing, via spliceosome"/>
    <property type="evidence" value="ECO:0000250"/>
    <property type="project" value="UniProtKB"/>
</dbReference>
<dbReference type="GO" id="GO:0000245">
    <property type="term" value="P:spliceosomal complex assembly"/>
    <property type="evidence" value="ECO:0000318"/>
    <property type="project" value="GO_Central"/>
</dbReference>
<dbReference type="GO" id="GO:1903241">
    <property type="term" value="P:U2-type prespliceosome assembly"/>
    <property type="evidence" value="ECO:0000250"/>
    <property type="project" value="UniProtKB"/>
</dbReference>
<dbReference type="FunFam" id="2.60.40.2690:FF:000002">
    <property type="entry name" value="Splicing factor 3a subunit 2"/>
    <property type="match status" value="1"/>
</dbReference>
<dbReference type="Gene3D" id="2.60.40.2690">
    <property type="match status" value="1"/>
</dbReference>
<dbReference type="InterPro" id="IPR003604">
    <property type="entry name" value="Matrin/U1-like-C_Znf_C2H2"/>
</dbReference>
<dbReference type="InterPro" id="IPR052092">
    <property type="entry name" value="SF3A2"/>
</dbReference>
<dbReference type="InterPro" id="IPR031781">
    <property type="entry name" value="SF3A2_dom"/>
</dbReference>
<dbReference type="InterPro" id="IPR036236">
    <property type="entry name" value="Znf_C2H2_sf"/>
</dbReference>
<dbReference type="InterPro" id="IPR013087">
    <property type="entry name" value="Znf_C2H2_type"/>
</dbReference>
<dbReference type="PANTHER" id="PTHR23205">
    <property type="entry name" value="SPLICING FACTOR 3A SUBUNIT 2"/>
    <property type="match status" value="1"/>
</dbReference>
<dbReference type="PANTHER" id="PTHR23205:SF0">
    <property type="entry name" value="SPLICING FACTOR 3A SUBUNIT 2"/>
    <property type="match status" value="1"/>
</dbReference>
<dbReference type="Pfam" id="PF16835">
    <property type="entry name" value="SF3A2"/>
    <property type="match status" value="1"/>
</dbReference>
<dbReference type="Pfam" id="PF12874">
    <property type="entry name" value="zf-met"/>
    <property type="match status" value="1"/>
</dbReference>
<dbReference type="SMART" id="SM01050">
    <property type="entry name" value="CactinC_cactus"/>
    <property type="match status" value="1"/>
</dbReference>
<dbReference type="SMART" id="SM00451">
    <property type="entry name" value="ZnF_U1"/>
    <property type="match status" value="1"/>
</dbReference>
<dbReference type="SUPFAM" id="SSF57667">
    <property type="entry name" value="beta-beta-alpha zinc fingers"/>
    <property type="match status" value="1"/>
</dbReference>
<evidence type="ECO:0000250" key="1">
    <source>
        <dbReference type="UniProtKB" id="Q15428"/>
    </source>
</evidence>
<evidence type="ECO:0000305" key="2"/>
<gene>
    <name type="primary">sf3a2</name>
    <name type="ORF">DDB_G0293876</name>
</gene>
<accession>Q54B65</accession>
<name>SF3A2_DICDI</name>
<sequence>MSEYGKAGSGGLQSSQYDNIDRRERQKQLVLEHVDVSKDPYIISNHIGSFECRLCLTVHNNVGNYLAHTQGKKHQTHLARRAAKEQRENPSVSKNNYIQTTRVIHKKTIKIGRPGYKIIKQRDSKTGQLSLLFQIDYPEIESGLQPRHRIMSAFEQRVEQPNKDYQYLLFAAEPYETIAFKIPNKEIDRTTGPDGKFFTHWDRNKTFTLQLYFKE</sequence>